<name>YH6H_SCHPO</name>
<dbReference type="EMBL" id="CU329671">
    <property type="protein sequence ID" value="CCD31367.1"/>
    <property type="molecule type" value="Genomic_DNA"/>
</dbReference>
<dbReference type="RefSeq" id="XP_004001714.1">
    <property type="nucleotide sequence ID" value="XM_004001665.1"/>
</dbReference>
<dbReference type="SMR" id="G2TRQ4"/>
<dbReference type="PaxDb" id="4896-SPBP23A10.17.1"/>
<dbReference type="EnsemblFungi" id="SPBP23A10.17.1">
    <property type="protein sequence ID" value="SPBP23A10.17.1:pep"/>
    <property type="gene ID" value="SPBP23A10.17"/>
</dbReference>
<dbReference type="PomBase" id="SPBP23A10.17"/>
<dbReference type="VEuPathDB" id="FungiDB:SPBP23A10.17"/>
<dbReference type="HOGENOM" id="CLU_167742_0_0_1"/>
<dbReference type="InParanoid" id="G2TRQ4"/>
<dbReference type="OMA" id="TMRVEYL"/>
<dbReference type="PRO" id="PR:G2TRQ4"/>
<dbReference type="Proteomes" id="UP000002485">
    <property type="component" value="Chromosome II"/>
</dbReference>
<proteinExistence type="inferred from homology"/>
<feature type="signal peptide" evidence="1">
    <location>
        <begin position="1"/>
        <end position="22"/>
    </location>
</feature>
<feature type="chain" id="PRO_0000416636" description="Uncharacterized protein P23A10.17">
    <location>
        <begin position="23"/>
        <end position="118"/>
    </location>
</feature>
<feature type="coiled-coil region" evidence="1">
    <location>
        <begin position="41"/>
        <end position="71"/>
    </location>
</feature>
<evidence type="ECO:0000255" key="1"/>
<reference key="1">
    <citation type="journal article" date="2002" name="Nature">
        <title>The genome sequence of Schizosaccharomyces pombe.</title>
        <authorList>
            <person name="Wood V."/>
            <person name="Gwilliam R."/>
            <person name="Rajandream M.A."/>
            <person name="Lyne M.H."/>
            <person name="Lyne R."/>
            <person name="Stewart A."/>
            <person name="Sgouros J.G."/>
            <person name="Peat N."/>
            <person name="Hayles J."/>
            <person name="Baker S.G."/>
            <person name="Basham D."/>
            <person name="Bowman S."/>
            <person name="Brooks K."/>
            <person name="Brown D."/>
            <person name="Brown S."/>
            <person name="Chillingworth T."/>
            <person name="Churcher C.M."/>
            <person name="Collins M."/>
            <person name="Connor R."/>
            <person name="Cronin A."/>
            <person name="Davis P."/>
            <person name="Feltwell T."/>
            <person name="Fraser A."/>
            <person name="Gentles S."/>
            <person name="Goble A."/>
            <person name="Hamlin N."/>
            <person name="Harris D.E."/>
            <person name="Hidalgo J."/>
            <person name="Hodgson G."/>
            <person name="Holroyd S."/>
            <person name="Hornsby T."/>
            <person name="Howarth S."/>
            <person name="Huckle E.J."/>
            <person name="Hunt S."/>
            <person name="Jagels K."/>
            <person name="James K.D."/>
            <person name="Jones L."/>
            <person name="Jones M."/>
            <person name="Leather S."/>
            <person name="McDonald S."/>
            <person name="McLean J."/>
            <person name="Mooney P."/>
            <person name="Moule S."/>
            <person name="Mungall K.L."/>
            <person name="Murphy L.D."/>
            <person name="Niblett D."/>
            <person name="Odell C."/>
            <person name="Oliver K."/>
            <person name="O'Neil S."/>
            <person name="Pearson D."/>
            <person name="Quail M.A."/>
            <person name="Rabbinowitsch E."/>
            <person name="Rutherford K.M."/>
            <person name="Rutter S."/>
            <person name="Saunders D."/>
            <person name="Seeger K."/>
            <person name="Sharp S."/>
            <person name="Skelton J."/>
            <person name="Simmonds M.N."/>
            <person name="Squares R."/>
            <person name="Squares S."/>
            <person name="Stevens K."/>
            <person name="Taylor K."/>
            <person name="Taylor R.G."/>
            <person name="Tivey A."/>
            <person name="Walsh S.V."/>
            <person name="Warren T."/>
            <person name="Whitehead S."/>
            <person name="Woodward J.R."/>
            <person name="Volckaert G."/>
            <person name="Aert R."/>
            <person name="Robben J."/>
            <person name="Grymonprez B."/>
            <person name="Weltjens I."/>
            <person name="Vanstreels E."/>
            <person name="Rieger M."/>
            <person name="Schaefer M."/>
            <person name="Mueller-Auer S."/>
            <person name="Gabel C."/>
            <person name="Fuchs M."/>
            <person name="Duesterhoeft A."/>
            <person name="Fritzc C."/>
            <person name="Holzer E."/>
            <person name="Moestl D."/>
            <person name="Hilbert H."/>
            <person name="Borzym K."/>
            <person name="Langer I."/>
            <person name="Beck A."/>
            <person name="Lehrach H."/>
            <person name="Reinhardt R."/>
            <person name="Pohl T.M."/>
            <person name="Eger P."/>
            <person name="Zimmermann W."/>
            <person name="Wedler H."/>
            <person name="Wambutt R."/>
            <person name="Purnelle B."/>
            <person name="Goffeau A."/>
            <person name="Cadieu E."/>
            <person name="Dreano S."/>
            <person name="Gloux S."/>
            <person name="Lelaure V."/>
            <person name="Mottier S."/>
            <person name="Galibert F."/>
            <person name="Aves S.J."/>
            <person name="Xiang Z."/>
            <person name="Hunt C."/>
            <person name="Moore K."/>
            <person name="Hurst S.M."/>
            <person name="Lucas M."/>
            <person name="Rochet M."/>
            <person name="Gaillardin C."/>
            <person name="Tallada V.A."/>
            <person name="Garzon A."/>
            <person name="Thode G."/>
            <person name="Daga R.R."/>
            <person name="Cruzado L."/>
            <person name="Jimenez J."/>
            <person name="Sanchez M."/>
            <person name="del Rey F."/>
            <person name="Benito J."/>
            <person name="Dominguez A."/>
            <person name="Revuelta J.L."/>
            <person name="Moreno S."/>
            <person name="Armstrong J."/>
            <person name="Forsburg S.L."/>
            <person name="Cerutti L."/>
            <person name="Lowe T."/>
            <person name="McCombie W.R."/>
            <person name="Paulsen I."/>
            <person name="Potashkin J."/>
            <person name="Shpakovski G.V."/>
            <person name="Ussery D."/>
            <person name="Barrell B.G."/>
            <person name="Nurse P."/>
        </authorList>
    </citation>
    <scope>NUCLEOTIDE SEQUENCE [LARGE SCALE GENOMIC DNA]</scope>
    <source>
        <strain>972 / ATCC 24843</strain>
    </source>
</reference>
<reference key="2">
    <citation type="journal article" date="2011" name="Science">
        <title>Comparative functional genomics of the fission yeasts.</title>
        <authorList>
            <person name="Rhind N."/>
            <person name="Chen Z."/>
            <person name="Yassour M."/>
            <person name="Thompson D.A."/>
            <person name="Haas B.J."/>
            <person name="Habib N."/>
            <person name="Wapinski I."/>
            <person name="Roy S."/>
            <person name="Lin M.F."/>
            <person name="Heiman D.I."/>
            <person name="Young S.K."/>
            <person name="Furuya K."/>
            <person name="Guo Y."/>
            <person name="Pidoux A."/>
            <person name="Chen H.M."/>
            <person name="Robbertse B."/>
            <person name="Goldberg J.M."/>
            <person name="Aoki K."/>
            <person name="Bayne E.H."/>
            <person name="Berlin A.M."/>
            <person name="Desjardins C.A."/>
            <person name="Dobbs E."/>
            <person name="Dukaj L."/>
            <person name="Fan L."/>
            <person name="FitzGerald M.G."/>
            <person name="French C."/>
            <person name="Gujja S."/>
            <person name="Hansen K."/>
            <person name="Keifenheim D."/>
            <person name="Levin J.Z."/>
            <person name="Mosher R.A."/>
            <person name="Mueller C.A."/>
            <person name="Pfiffner J."/>
            <person name="Priest M."/>
            <person name="Russ C."/>
            <person name="Smialowska A."/>
            <person name="Swoboda P."/>
            <person name="Sykes S.M."/>
            <person name="Vaughn M."/>
            <person name="Vengrova S."/>
            <person name="Yoder R."/>
            <person name="Zeng Q."/>
            <person name="Allshire R."/>
            <person name="Baulcombe D."/>
            <person name="Birren B.W."/>
            <person name="Brown W."/>
            <person name="Ekwall K."/>
            <person name="Kellis M."/>
            <person name="Leatherwood J."/>
            <person name="Levin H."/>
            <person name="Margalit H."/>
            <person name="Martienssen R."/>
            <person name="Nieduszynski C.A."/>
            <person name="Spatafora J.W."/>
            <person name="Friedman N."/>
            <person name="Dalgaard J.Z."/>
            <person name="Baumann P."/>
            <person name="Niki H."/>
            <person name="Regev A."/>
            <person name="Nusbaum C."/>
        </authorList>
    </citation>
    <scope>IDENTIFICATION</scope>
</reference>
<sequence length="118" mass="13564">MKMSYLRSGIVGFLAGASLSYAAGVQALISTSKQNKDELLTATEALETDKQLYKKIEKKIEELESSCVKKSSWEIQESEWKAMFQTMRVEYLELLEKQKTLGEVLNKLVEDRQTKFQF</sequence>
<protein>
    <recommendedName>
        <fullName>Uncharacterized protein P23A10.17</fullName>
    </recommendedName>
</protein>
<gene>
    <name type="ORF">SPBP23A10.17</name>
</gene>
<accession>G2TRQ4</accession>
<organism>
    <name type="scientific">Schizosaccharomyces pombe (strain 972 / ATCC 24843)</name>
    <name type="common">Fission yeast</name>
    <dbReference type="NCBI Taxonomy" id="284812"/>
    <lineage>
        <taxon>Eukaryota</taxon>
        <taxon>Fungi</taxon>
        <taxon>Dikarya</taxon>
        <taxon>Ascomycota</taxon>
        <taxon>Taphrinomycotina</taxon>
        <taxon>Schizosaccharomycetes</taxon>
        <taxon>Schizosaccharomycetales</taxon>
        <taxon>Schizosaccharomycetaceae</taxon>
        <taxon>Schizosaccharomyces</taxon>
    </lineage>
</organism>
<keyword id="KW-0175">Coiled coil</keyword>
<keyword id="KW-1185">Reference proteome</keyword>
<keyword id="KW-0732">Signal</keyword>